<organism>
    <name type="scientific">Photobacterium profundum (strain SS9)</name>
    <dbReference type="NCBI Taxonomy" id="298386"/>
    <lineage>
        <taxon>Bacteria</taxon>
        <taxon>Pseudomonadati</taxon>
        <taxon>Pseudomonadota</taxon>
        <taxon>Gammaproteobacteria</taxon>
        <taxon>Vibrionales</taxon>
        <taxon>Vibrionaceae</taxon>
        <taxon>Photobacterium</taxon>
    </lineage>
</organism>
<accession>Q6LRA2</accession>
<dbReference type="EC" id="1.3.5.2" evidence="1"/>
<dbReference type="EMBL" id="CR378668">
    <property type="protein sequence ID" value="CAG20174.1"/>
    <property type="molecule type" value="Genomic_DNA"/>
</dbReference>
<dbReference type="RefSeq" id="WP_011218482.1">
    <property type="nucleotide sequence ID" value="NC_006370.1"/>
</dbReference>
<dbReference type="SMR" id="Q6LRA2"/>
<dbReference type="STRING" id="298386.PBPRA1767"/>
<dbReference type="KEGG" id="ppr:PBPRA1767"/>
<dbReference type="eggNOG" id="COG0167">
    <property type="taxonomic scope" value="Bacteria"/>
</dbReference>
<dbReference type="HOGENOM" id="CLU_013640_2_0_6"/>
<dbReference type="UniPathway" id="UPA00070">
    <property type="reaction ID" value="UER00946"/>
</dbReference>
<dbReference type="Proteomes" id="UP000000593">
    <property type="component" value="Chromosome 1"/>
</dbReference>
<dbReference type="GO" id="GO:0005737">
    <property type="term" value="C:cytoplasm"/>
    <property type="evidence" value="ECO:0007669"/>
    <property type="project" value="InterPro"/>
</dbReference>
<dbReference type="GO" id="GO:0005886">
    <property type="term" value="C:plasma membrane"/>
    <property type="evidence" value="ECO:0007669"/>
    <property type="project" value="UniProtKB-SubCell"/>
</dbReference>
<dbReference type="GO" id="GO:0106430">
    <property type="term" value="F:dihydroorotate dehydrogenase (quinone) activity"/>
    <property type="evidence" value="ECO:0007669"/>
    <property type="project" value="UniProtKB-EC"/>
</dbReference>
<dbReference type="GO" id="GO:0006207">
    <property type="term" value="P:'de novo' pyrimidine nucleobase biosynthetic process"/>
    <property type="evidence" value="ECO:0007669"/>
    <property type="project" value="InterPro"/>
</dbReference>
<dbReference type="GO" id="GO:0044205">
    <property type="term" value="P:'de novo' UMP biosynthetic process"/>
    <property type="evidence" value="ECO:0007669"/>
    <property type="project" value="UniProtKB-UniRule"/>
</dbReference>
<dbReference type="CDD" id="cd04738">
    <property type="entry name" value="DHOD_2_like"/>
    <property type="match status" value="1"/>
</dbReference>
<dbReference type="FunFam" id="3.20.20.70:FF:000028">
    <property type="entry name" value="Dihydroorotate dehydrogenase (quinone)"/>
    <property type="match status" value="1"/>
</dbReference>
<dbReference type="Gene3D" id="3.20.20.70">
    <property type="entry name" value="Aldolase class I"/>
    <property type="match status" value="1"/>
</dbReference>
<dbReference type="HAMAP" id="MF_00225">
    <property type="entry name" value="DHO_dh_type2"/>
    <property type="match status" value="1"/>
</dbReference>
<dbReference type="InterPro" id="IPR013785">
    <property type="entry name" value="Aldolase_TIM"/>
</dbReference>
<dbReference type="InterPro" id="IPR050074">
    <property type="entry name" value="DHO_dehydrogenase"/>
</dbReference>
<dbReference type="InterPro" id="IPR012135">
    <property type="entry name" value="Dihydroorotate_DH_1_2"/>
</dbReference>
<dbReference type="InterPro" id="IPR005719">
    <property type="entry name" value="Dihydroorotate_DH_2"/>
</dbReference>
<dbReference type="InterPro" id="IPR005720">
    <property type="entry name" value="Dihydroorotate_DH_cat"/>
</dbReference>
<dbReference type="InterPro" id="IPR001295">
    <property type="entry name" value="Dihydroorotate_DH_CS"/>
</dbReference>
<dbReference type="NCBIfam" id="NF003644">
    <property type="entry name" value="PRK05286.1-1"/>
    <property type="match status" value="1"/>
</dbReference>
<dbReference type="NCBIfam" id="NF003645">
    <property type="entry name" value="PRK05286.1-2"/>
    <property type="match status" value="1"/>
</dbReference>
<dbReference type="NCBIfam" id="NF003646">
    <property type="entry name" value="PRK05286.1-4"/>
    <property type="match status" value="1"/>
</dbReference>
<dbReference type="NCBIfam" id="NF003652">
    <property type="entry name" value="PRK05286.2-5"/>
    <property type="match status" value="1"/>
</dbReference>
<dbReference type="NCBIfam" id="TIGR01036">
    <property type="entry name" value="pyrD_sub2"/>
    <property type="match status" value="1"/>
</dbReference>
<dbReference type="PANTHER" id="PTHR48109:SF4">
    <property type="entry name" value="DIHYDROOROTATE DEHYDROGENASE (QUINONE), MITOCHONDRIAL"/>
    <property type="match status" value="1"/>
</dbReference>
<dbReference type="PANTHER" id="PTHR48109">
    <property type="entry name" value="DIHYDROOROTATE DEHYDROGENASE (QUINONE), MITOCHONDRIAL-RELATED"/>
    <property type="match status" value="1"/>
</dbReference>
<dbReference type="Pfam" id="PF01180">
    <property type="entry name" value="DHO_dh"/>
    <property type="match status" value="1"/>
</dbReference>
<dbReference type="PIRSF" id="PIRSF000164">
    <property type="entry name" value="DHO_oxidase"/>
    <property type="match status" value="1"/>
</dbReference>
<dbReference type="SUPFAM" id="SSF51395">
    <property type="entry name" value="FMN-linked oxidoreductases"/>
    <property type="match status" value="1"/>
</dbReference>
<dbReference type="PROSITE" id="PS00911">
    <property type="entry name" value="DHODEHASE_1"/>
    <property type="match status" value="1"/>
</dbReference>
<dbReference type="PROSITE" id="PS00912">
    <property type="entry name" value="DHODEHASE_2"/>
    <property type="match status" value="1"/>
</dbReference>
<keyword id="KW-1003">Cell membrane</keyword>
<keyword id="KW-0285">Flavoprotein</keyword>
<keyword id="KW-0288">FMN</keyword>
<keyword id="KW-0472">Membrane</keyword>
<keyword id="KW-0560">Oxidoreductase</keyword>
<keyword id="KW-0665">Pyrimidine biosynthesis</keyword>
<keyword id="KW-1185">Reference proteome</keyword>
<reference key="1">
    <citation type="journal article" date="2005" name="Science">
        <title>Life at depth: Photobacterium profundum genome sequence and expression analysis.</title>
        <authorList>
            <person name="Vezzi A."/>
            <person name="Campanaro S."/>
            <person name="D'Angelo M."/>
            <person name="Simonato F."/>
            <person name="Vitulo N."/>
            <person name="Lauro F.M."/>
            <person name="Cestaro A."/>
            <person name="Malacrida G."/>
            <person name="Simionati B."/>
            <person name="Cannata N."/>
            <person name="Romualdi C."/>
            <person name="Bartlett D.H."/>
            <person name="Valle G."/>
        </authorList>
    </citation>
    <scope>NUCLEOTIDE SEQUENCE [LARGE SCALE GENOMIC DNA]</scope>
    <source>
        <strain>ATCC BAA-1253 / SS9</strain>
    </source>
</reference>
<protein>
    <recommendedName>
        <fullName evidence="1">Dihydroorotate dehydrogenase (quinone)</fullName>
        <ecNumber evidence="1">1.3.5.2</ecNumber>
    </recommendedName>
    <alternativeName>
        <fullName evidence="1">DHOdehase</fullName>
        <shortName evidence="1">DHOD</shortName>
        <shortName evidence="1">DHODase</shortName>
    </alternativeName>
    <alternativeName>
        <fullName evidence="1">Dihydroorotate oxidase</fullName>
    </alternativeName>
</protein>
<sequence length="336" mass="36761">MIYRLARSVFFQLDAEKAHDLAIQNFSRFTGTPLDLFYRQHVPDRPVEVMGIKFKNPVGLAAGLDKNGECIDAFGAMGFGFVEVGTVTPRPQSGNEKPRLFRVLPAEGLINRFGFNNLGVDNLVENVKKSKYDGVIGINIGKNKDTPIEKGAEDYLICMDKVYEHAGYIAVNISSPNTPGLRSLQYGEALDDLLSQLKAKQEELAAKHGKYVPLALKIAPDLEDHEIVQIAESLIKNKIDGVIGTNTTLDRTLVKGMPHCDEMGGLSGRPLQNRSTEVIRRLAEELNGALPIIGVGGIDSAISAREKMNAGAQLVQIYSGFIYHGPKLVKDIVMNS</sequence>
<name>PYRD_PHOPR</name>
<evidence type="ECO:0000255" key="1">
    <source>
        <dbReference type="HAMAP-Rule" id="MF_00225"/>
    </source>
</evidence>
<proteinExistence type="inferred from homology"/>
<gene>
    <name evidence="1" type="primary">pyrD</name>
    <name type="ordered locus">PBPRA1767</name>
</gene>
<feature type="chain" id="PRO_0000148465" description="Dihydroorotate dehydrogenase (quinone)">
    <location>
        <begin position="1"/>
        <end position="336"/>
    </location>
</feature>
<feature type="active site" description="Nucleophile" evidence="1">
    <location>
        <position position="175"/>
    </location>
</feature>
<feature type="binding site" evidence="1">
    <location>
        <begin position="62"/>
        <end position="66"/>
    </location>
    <ligand>
        <name>FMN</name>
        <dbReference type="ChEBI" id="CHEBI:58210"/>
    </ligand>
</feature>
<feature type="binding site" evidence="1">
    <location>
        <position position="66"/>
    </location>
    <ligand>
        <name>substrate</name>
    </ligand>
</feature>
<feature type="binding site" evidence="1">
    <location>
        <position position="86"/>
    </location>
    <ligand>
        <name>FMN</name>
        <dbReference type="ChEBI" id="CHEBI:58210"/>
    </ligand>
</feature>
<feature type="binding site" evidence="1">
    <location>
        <begin position="111"/>
        <end position="115"/>
    </location>
    <ligand>
        <name>substrate</name>
    </ligand>
</feature>
<feature type="binding site" evidence="1">
    <location>
        <position position="139"/>
    </location>
    <ligand>
        <name>FMN</name>
        <dbReference type="ChEBI" id="CHEBI:58210"/>
    </ligand>
</feature>
<feature type="binding site" evidence="1">
    <location>
        <position position="172"/>
    </location>
    <ligand>
        <name>FMN</name>
        <dbReference type="ChEBI" id="CHEBI:58210"/>
    </ligand>
</feature>
<feature type="binding site" evidence="1">
    <location>
        <position position="172"/>
    </location>
    <ligand>
        <name>substrate</name>
    </ligand>
</feature>
<feature type="binding site" evidence="1">
    <location>
        <position position="177"/>
    </location>
    <ligand>
        <name>substrate</name>
    </ligand>
</feature>
<feature type="binding site" evidence="1">
    <location>
        <position position="217"/>
    </location>
    <ligand>
        <name>FMN</name>
        <dbReference type="ChEBI" id="CHEBI:58210"/>
    </ligand>
</feature>
<feature type="binding site" evidence="1">
    <location>
        <position position="245"/>
    </location>
    <ligand>
        <name>FMN</name>
        <dbReference type="ChEBI" id="CHEBI:58210"/>
    </ligand>
</feature>
<feature type="binding site" evidence="1">
    <location>
        <begin position="246"/>
        <end position="247"/>
    </location>
    <ligand>
        <name>substrate</name>
    </ligand>
</feature>
<feature type="binding site" evidence="1">
    <location>
        <position position="268"/>
    </location>
    <ligand>
        <name>FMN</name>
        <dbReference type="ChEBI" id="CHEBI:58210"/>
    </ligand>
</feature>
<feature type="binding site" evidence="1">
    <location>
        <position position="297"/>
    </location>
    <ligand>
        <name>FMN</name>
        <dbReference type="ChEBI" id="CHEBI:58210"/>
    </ligand>
</feature>
<feature type="binding site" evidence="1">
    <location>
        <begin position="318"/>
        <end position="319"/>
    </location>
    <ligand>
        <name>FMN</name>
        <dbReference type="ChEBI" id="CHEBI:58210"/>
    </ligand>
</feature>
<comment type="function">
    <text evidence="1">Catalyzes the conversion of dihydroorotate to orotate with quinone as electron acceptor.</text>
</comment>
<comment type="catalytic activity">
    <reaction evidence="1">
        <text>(S)-dihydroorotate + a quinone = orotate + a quinol</text>
        <dbReference type="Rhea" id="RHEA:30187"/>
        <dbReference type="ChEBI" id="CHEBI:24646"/>
        <dbReference type="ChEBI" id="CHEBI:30839"/>
        <dbReference type="ChEBI" id="CHEBI:30864"/>
        <dbReference type="ChEBI" id="CHEBI:132124"/>
        <dbReference type="EC" id="1.3.5.2"/>
    </reaction>
</comment>
<comment type="cofactor">
    <cofactor evidence="1">
        <name>FMN</name>
        <dbReference type="ChEBI" id="CHEBI:58210"/>
    </cofactor>
    <text evidence="1">Binds 1 FMN per subunit.</text>
</comment>
<comment type="pathway">
    <text evidence="1">Pyrimidine metabolism; UMP biosynthesis via de novo pathway; orotate from (S)-dihydroorotate (quinone route): step 1/1.</text>
</comment>
<comment type="subunit">
    <text evidence="1">Monomer.</text>
</comment>
<comment type="subcellular location">
    <subcellularLocation>
        <location evidence="1">Cell membrane</location>
        <topology evidence="1">Peripheral membrane protein</topology>
    </subcellularLocation>
</comment>
<comment type="similarity">
    <text evidence="1">Belongs to the dihydroorotate dehydrogenase family. Type 2 subfamily.</text>
</comment>